<reference key="1">
    <citation type="submission" date="2008-05" db="EMBL/GenBank/DDBJ databases">
        <title>Complete sequence of chromosome 1 of Ralstonia pickettii 12J.</title>
        <authorList>
            <person name="Lucas S."/>
            <person name="Copeland A."/>
            <person name="Lapidus A."/>
            <person name="Glavina del Rio T."/>
            <person name="Dalin E."/>
            <person name="Tice H."/>
            <person name="Bruce D."/>
            <person name="Goodwin L."/>
            <person name="Pitluck S."/>
            <person name="Meincke L."/>
            <person name="Brettin T."/>
            <person name="Detter J.C."/>
            <person name="Han C."/>
            <person name="Kuske C.R."/>
            <person name="Schmutz J."/>
            <person name="Larimer F."/>
            <person name="Land M."/>
            <person name="Hauser L."/>
            <person name="Kyrpides N."/>
            <person name="Mikhailova N."/>
            <person name="Marsh T."/>
            <person name="Richardson P."/>
        </authorList>
    </citation>
    <scope>NUCLEOTIDE SEQUENCE [LARGE SCALE GENOMIC DNA]</scope>
    <source>
        <strain>12J</strain>
    </source>
</reference>
<accession>B2U8C4</accession>
<proteinExistence type="inferred from homology"/>
<dbReference type="EC" id="3.1.3.11" evidence="1"/>
<dbReference type="EMBL" id="CP001068">
    <property type="protein sequence ID" value="ACD27400.1"/>
    <property type="molecule type" value="Genomic_DNA"/>
</dbReference>
<dbReference type="SMR" id="B2U8C4"/>
<dbReference type="STRING" id="402626.Rpic_2266"/>
<dbReference type="KEGG" id="rpi:Rpic_2266"/>
<dbReference type="eggNOG" id="COG0158">
    <property type="taxonomic scope" value="Bacteria"/>
</dbReference>
<dbReference type="HOGENOM" id="CLU_039977_0_0_4"/>
<dbReference type="UniPathway" id="UPA00138"/>
<dbReference type="GO" id="GO:0005829">
    <property type="term" value="C:cytosol"/>
    <property type="evidence" value="ECO:0007669"/>
    <property type="project" value="TreeGrafter"/>
</dbReference>
<dbReference type="GO" id="GO:0042132">
    <property type="term" value="F:fructose 1,6-bisphosphate 1-phosphatase activity"/>
    <property type="evidence" value="ECO:0007669"/>
    <property type="project" value="UniProtKB-UniRule"/>
</dbReference>
<dbReference type="GO" id="GO:0000287">
    <property type="term" value="F:magnesium ion binding"/>
    <property type="evidence" value="ECO:0007669"/>
    <property type="project" value="UniProtKB-UniRule"/>
</dbReference>
<dbReference type="GO" id="GO:0030388">
    <property type="term" value="P:fructose 1,6-bisphosphate metabolic process"/>
    <property type="evidence" value="ECO:0007669"/>
    <property type="project" value="TreeGrafter"/>
</dbReference>
<dbReference type="GO" id="GO:0006002">
    <property type="term" value="P:fructose 6-phosphate metabolic process"/>
    <property type="evidence" value="ECO:0007669"/>
    <property type="project" value="TreeGrafter"/>
</dbReference>
<dbReference type="GO" id="GO:0006000">
    <property type="term" value="P:fructose metabolic process"/>
    <property type="evidence" value="ECO:0007669"/>
    <property type="project" value="TreeGrafter"/>
</dbReference>
<dbReference type="GO" id="GO:0006094">
    <property type="term" value="P:gluconeogenesis"/>
    <property type="evidence" value="ECO:0007669"/>
    <property type="project" value="UniProtKB-UniRule"/>
</dbReference>
<dbReference type="GO" id="GO:0005986">
    <property type="term" value="P:sucrose biosynthetic process"/>
    <property type="evidence" value="ECO:0007669"/>
    <property type="project" value="TreeGrafter"/>
</dbReference>
<dbReference type="CDD" id="cd00354">
    <property type="entry name" value="FBPase"/>
    <property type="match status" value="1"/>
</dbReference>
<dbReference type="FunFam" id="3.30.540.10:FF:000006">
    <property type="entry name" value="Fructose-1,6-bisphosphatase class 1"/>
    <property type="match status" value="1"/>
</dbReference>
<dbReference type="FunFam" id="3.40.190.80:FF:000011">
    <property type="entry name" value="Fructose-1,6-bisphosphatase class 1"/>
    <property type="match status" value="1"/>
</dbReference>
<dbReference type="Gene3D" id="3.40.190.80">
    <property type="match status" value="1"/>
</dbReference>
<dbReference type="Gene3D" id="3.30.540.10">
    <property type="entry name" value="Fructose-1,6-Bisphosphatase, subunit A, domain 1"/>
    <property type="match status" value="1"/>
</dbReference>
<dbReference type="HAMAP" id="MF_01855">
    <property type="entry name" value="FBPase_class1"/>
    <property type="match status" value="1"/>
</dbReference>
<dbReference type="InterPro" id="IPR044015">
    <property type="entry name" value="FBPase_C_dom"/>
</dbReference>
<dbReference type="InterPro" id="IPR000146">
    <property type="entry name" value="FBPase_class-1"/>
</dbReference>
<dbReference type="InterPro" id="IPR033391">
    <property type="entry name" value="FBPase_N"/>
</dbReference>
<dbReference type="InterPro" id="IPR028343">
    <property type="entry name" value="FBPtase"/>
</dbReference>
<dbReference type="NCBIfam" id="NF006778">
    <property type="entry name" value="PRK09293.1-1"/>
    <property type="match status" value="1"/>
</dbReference>
<dbReference type="NCBIfam" id="NF006779">
    <property type="entry name" value="PRK09293.1-3"/>
    <property type="match status" value="1"/>
</dbReference>
<dbReference type="NCBIfam" id="NF006780">
    <property type="entry name" value="PRK09293.1-4"/>
    <property type="match status" value="1"/>
</dbReference>
<dbReference type="PANTHER" id="PTHR11556">
    <property type="entry name" value="FRUCTOSE-1,6-BISPHOSPHATASE-RELATED"/>
    <property type="match status" value="1"/>
</dbReference>
<dbReference type="PANTHER" id="PTHR11556:SF35">
    <property type="entry name" value="SEDOHEPTULOSE-1,7-BISPHOSPHATASE, CHLOROPLASTIC"/>
    <property type="match status" value="1"/>
</dbReference>
<dbReference type="Pfam" id="PF00316">
    <property type="entry name" value="FBPase"/>
    <property type="match status" value="1"/>
</dbReference>
<dbReference type="Pfam" id="PF18913">
    <property type="entry name" value="FBPase_C"/>
    <property type="match status" value="1"/>
</dbReference>
<dbReference type="PIRSF" id="PIRSF500210">
    <property type="entry name" value="FBPtase"/>
    <property type="match status" value="1"/>
</dbReference>
<dbReference type="PIRSF" id="PIRSF000904">
    <property type="entry name" value="FBPtase_SBPase"/>
    <property type="match status" value="1"/>
</dbReference>
<dbReference type="PRINTS" id="PR00115">
    <property type="entry name" value="F16BPHPHTASE"/>
</dbReference>
<dbReference type="SUPFAM" id="SSF56655">
    <property type="entry name" value="Carbohydrate phosphatase"/>
    <property type="match status" value="1"/>
</dbReference>
<comment type="catalytic activity">
    <reaction evidence="1">
        <text>beta-D-fructose 1,6-bisphosphate + H2O = beta-D-fructose 6-phosphate + phosphate</text>
        <dbReference type="Rhea" id="RHEA:11064"/>
        <dbReference type="ChEBI" id="CHEBI:15377"/>
        <dbReference type="ChEBI" id="CHEBI:32966"/>
        <dbReference type="ChEBI" id="CHEBI:43474"/>
        <dbReference type="ChEBI" id="CHEBI:57634"/>
        <dbReference type="EC" id="3.1.3.11"/>
    </reaction>
</comment>
<comment type="cofactor">
    <cofactor evidence="1">
        <name>Mg(2+)</name>
        <dbReference type="ChEBI" id="CHEBI:18420"/>
    </cofactor>
    <text evidence="1">Binds 2 magnesium ions per subunit.</text>
</comment>
<comment type="pathway">
    <text evidence="1">Carbohydrate biosynthesis; gluconeogenesis.</text>
</comment>
<comment type="subunit">
    <text evidence="1">Homotetramer.</text>
</comment>
<comment type="subcellular location">
    <subcellularLocation>
        <location evidence="1">Cytoplasm</location>
    </subcellularLocation>
</comment>
<comment type="similarity">
    <text evidence="1">Belongs to the FBPase class 1 family.</text>
</comment>
<keyword id="KW-0119">Carbohydrate metabolism</keyword>
<keyword id="KW-0963">Cytoplasm</keyword>
<keyword id="KW-0378">Hydrolase</keyword>
<keyword id="KW-0460">Magnesium</keyword>
<keyword id="KW-0479">Metal-binding</keyword>
<gene>
    <name evidence="1" type="primary">fbp</name>
    <name type="ordered locus">Rpic_2266</name>
</gene>
<evidence type="ECO:0000255" key="1">
    <source>
        <dbReference type="HAMAP-Rule" id="MF_01855"/>
    </source>
</evidence>
<feature type="chain" id="PRO_0000364664" description="Fructose-1,6-bisphosphatase class 1">
    <location>
        <begin position="1"/>
        <end position="338"/>
    </location>
</feature>
<feature type="binding site" evidence="1">
    <location>
        <position position="91"/>
    </location>
    <ligand>
        <name>Mg(2+)</name>
        <dbReference type="ChEBI" id="CHEBI:18420"/>
        <label>1</label>
    </ligand>
</feature>
<feature type="binding site" evidence="1">
    <location>
        <position position="113"/>
    </location>
    <ligand>
        <name>Mg(2+)</name>
        <dbReference type="ChEBI" id="CHEBI:18420"/>
        <label>1</label>
    </ligand>
</feature>
<feature type="binding site" evidence="1">
    <location>
        <position position="113"/>
    </location>
    <ligand>
        <name>Mg(2+)</name>
        <dbReference type="ChEBI" id="CHEBI:18420"/>
        <label>2</label>
    </ligand>
</feature>
<feature type="binding site" evidence="1">
    <location>
        <position position="115"/>
    </location>
    <ligand>
        <name>Mg(2+)</name>
        <dbReference type="ChEBI" id="CHEBI:18420"/>
        <label>1</label>
    </ligand>
</feature>
<feature type="binding site" evidence="1">
    <location>
        <begin position="116"/>
        <end position="119"/>
    </location>
    <ligand>
        <name>substrate</name>
    </ligand>
</feature>
<feature type="binding site" evidence="1">
    <location>
        <position position="116"/>
    </location>
    <ligand>
        <name>Mg(2+)</name>
        <dbReference type="ChEBI" id="CHEBI:18420"/>
        <label>2</label>
    </ligand>
</feature>
<feature type="binding site" evidence="1">
    <location>
        <position position="208"/>
    </location>
    <ligand>
        <name>substrate</name>
    </ligand>
</feature>
<feature type="binding site" evidence="1">
    <location>
        <position position="274"/>
    </location>
    <ligand>
        <name>substrate</name>
    </ligand>
</feature>
<feature type="binding site" evidence="1">
    <location>
        <position position="280"/>
    </location>
    <ligand>
        <name>Mg(2+)</name>
        <dbReference type="ChEBI" id="CHEBI:18420"/>
        <label>2</label>
    </ligand>
</feature>
<organism>
    <name type="scientific">Ralstonia pickettii (strain 12J)</name>
    <dbReference type="NCBI Taxonomy" id="402626"/>
    <lineage>
        <taxon>Bacteria</taxon>
        <taxon>Pseudomonadati</taxon>
        <taxon>Pseudomonadota</taxon>
        <taxon>Betaproteobacteria</taxon>
        <taxon>Burkholderiales</taxon>
        <taxon>Burkholderiaceae</taxon>
        <taxon>Ralstonia</taxon>
    </lineage>
</organism>
<name>F16PA_RALPJ</name>
<sequence>MKRINLTRYLIEEQREHNTIPAELRLLLEVVARACKAISHSVNKGALAGVLGSAGTGNVQGETQQKLDVIANEVLLEANEYGGNLAAMASEEMESFYEIPHRYPKGEYLLLFDPLDGSSNIDVNVSIGTIFSVLHMPKAGEAVTEADFMQPGSKQVAAGYAVYGPQTTLVLTVGNGVHMFTLDREVGSFVLTHRDVKIPVDTKEFAINMSNMRHWAPPVRRYIDECLAGTEGPRGKDFNMRWIASMVADVHRILTRGGIFMYPWDKREPGKAGKLRLMYEANPMAFLVEQAGGAATNGEQRILDIQPEKLHQRVAVVLGSKNEVDRVTQYHLEAKQTP</sequence>
<protein>
    <recommendedName>
        <fullName evidence="1">Fructose-1,6-bisphosphatase class 1</fullName>
        <shortName evidence="1">FBPase class 1</shortName>
        <ecNumber evidence="1">3.1.3.11</ecNumber>
    </recommendedName>
    <alternativeName>
        <fullName evidence="1">D-fructose-1,6-bisphosphate 1-phosphohydrolase class 1</fullName>
    </alternativeName>
</protein>